<reference key="1">
    <citation type="journal article" date="2007" name="Nat. Biotechnol.">
        <title>Genome sequence of the lignocellulose-bioconverting and xylose-fermenting yeast Pichia stipitis.</title>
        <authorList>
            <person name="Jeffries T.W."/>
            <person name="Grigoriev I.V."/>
            <person name="Grimwood J."/>
            <person name="Laplaza J.M."/>
            <person name="Aerts A."/>
            <person name="Salamov A."/>
            <person name="Schmutz J."/>
            <person name="Lindquist E."/>
            <person name="Dehal P."/>
            <person name="Shapiro H."/>
            <person name="Jin Y.-S."/>
            <person name="Passoth V."/>
            <person name="Richardson P.M."/>
        </authorList>
    </citation>
    <scope>NUCLEOTIDE SEQUENCE [LARGE SCALE GENOMIC DNA]</scope>
    <source>
        <strain>ATCC 58785 / CBS 6054 / NBRC 10063 / NRRL Y-11545</strain>
    </source>
</reference>
<evidence type="ECO:0000250" key="1"/>
<evidence type="ECO:0000255" key="2">
    <source>
        <dbReference type="PROSITE-ProRule" id="PRU00507"/>
    </source>
</evidence>
<evidence type="ECO:0000256" key="3">
    <source>
        <dbReference type="SAM" id="MobiDB-lite"/>
    </source>
</evidence>
<evidence type="ECO:0000305" key="4"/>
<proteinExistence type="inferred from homology"/>
<protein>
    <recommendedName>
        <fullName>Nascent polypeptide-associated complex subunit beta</fullName>
        <shortName>NAC-beta</shortName>
    </recommendedName>
    <alternativeName>
        <fullName>Beta-NAC</fullName>
    </alternativeName>
</protein>
<keyword id="KW-0963">Cytoplasm</keyword>
<keyword id="KW-0539">Nucleus</keyword>
<keyword id="KW-0653">Protein transport</keyword>
<keyword id="KW-1185">Reference proteome</keyword>
<keyword id="KW-0678">Repressor</keyword>
<keyword id="KW-0804">Transcription</keyword>
<keyword id="KW-0805">Transcription regulation</keyword>
<keyword id="KW-0813">Transport</keyword>
<comment type="function">
    <text evidence="1">Component of the nascent polypeptide-associated complex (NAC), a dynamic component of the ribosomal exit tunnel, protecting the emerging polypeptides from interaction with other cytoplasmic proteins to ensure appropriate nascent protein targeting. The NAC complex also promotes mitochondrial protein import by enhancing productive ribosome interactions with the outer mitochondrial membrane and blocks the inappropriate interaction of ribosomes translating non-secretory nascent polypeptides with translocation sites in the membrane of the endoplasmic reticulum. EGD1 may act as a transcription factor that exert a negative effect on the expression of several genes that are transcribed by RNA polymerase II.</text>
</comment>
<comment type="subunit">
    <text evidence="1">Part of the nascent polypeptide-associated complex (NAC), consisting of EGD2 and EGD1. NAC associates with ribosomes via EGD1 (By similarity).</text>
</comment>
<comment type="subcellular location">
    <subcellularLocation>
        <location evidence="1">Cytoplasm</location>
    </subcellularLocation>
    <subcellularLocation>
        <location evidence="1">Nucleus</location>
    </subcellularLocation>
    <text evidence="1">Predominantly cytoplasmic, may also transiently localize to the nucleus.</text>
</comment>
<comment type="similarity">
    <text evidence="4">Belongs to the NAC-beta family.</text>
</comment>
<name>NACB_PICST</name>
<dbReference type="EMBL" id="AAVQ01000002">
    <property type="protein sequence ID" value="EAZ63097.1"/>
    <property type="molecule type" value="Genomic_DNA"/>
</dbReference>
<dbReference type="RefSeq" id="XP_001387120.1">
    <property type="nucleotide sequence ID" value="XM_001387083.1"/>
</dbReference>
<dbReference type="SMR" id="A3GHR2"/>
<dbReference type="FunCoup" id="A3GHR2">
    <property type="interactions" value="1228"/>
</dbReference>
<dbReference type="STRING" id="322104.A3GHR2"/>
<dbReference type="GeneID" id="4851811"/>
<dbReference type="KEGG" id="pic:PICST_75534"/>
<dbReference type="eggNOG" id="KOG2240">
    <property type="taxonomic scope" value="Eukaryota"/>
</dbReference>
<dbReference type="HOGENOM" id="CLU_098726_2_2_1"/>
<dbReference type="InParanoid" id="A3GHR2"/>
<dbReference type="OMA" id="AGDTYME"/>
<dbReference type="OrthoDB" id="8033832at2759"/>
<dbReference type="Proteomes" id="UP000002258">
    <property type="component" value="Chromosome 1"/>
</dbReference>
<dbReference type="GO" id="GO:0005737">
    <property type="term" value="C:cytoplasm"/>
    <property type="evidence" value="ECO:0007669"/>
    <property type="project" value="UniProtKB-SubCell"/>
</dbReference>
<dbReference type="GO" id="GO:0005634">
    <property type="term" value="C:nucleus"/>
    <property type="evidence" value="ECO:0007669"/>
    <property type="project" value="UniProtKB-SubCell"/>
</dbReference>
<dbReference type="GO" id="GO:0015031">
    <property type="term" value="P:protein transport"/>
    <property type="evidence" value="ECO:0007669"/>
    <property type="project" value="UniProtKB-KW"/>
</dbReference>
<dbReference type="CDD" id="cd22055">
    <property type="entry name" value="NAC_BTF3"/>
    <property type="match status" value="1"/>
</dbReference>
<dbReference type="FunFam" id="2.20.70.30:FF:000001">
    <property type="entry name" value="Transcription factor BTF3 homolog"/>
    <property type="match status" value="1"/>
</dbReference>
<dbReference type="Gene3D" id="2.20.70.30">
    <property type="entry name" value="Nascent polypeptide-associated complex domain"/>
    <property type="match status" value="1"/>
</dbReference>
<dbReference type="InterPro" id="IPR039370">
    <property type="entry name" value="BTF3"/>
</dbReference>
<dbReference type="InterPro" id="IPR038187">
    <property type="entry name" value="NAC_A/B_dom_sf"/>
</dbReference>
<dbReference type="InterPro" id="IPR002715">
    <property type="entry name" value="Nas_poly-pep-assoc_cplx_dom"/>
</dbReference>
<dbReference type="PANTHER" id="PTHR10351">
    <property type="entry name" value="TRANSCRIPTION FACTOR BTF3 FAMILY MEMBER"/>
    <property type="match status" value="1"/>
</dbReference>
<dbReference type="Pfam" id="PF01849">
    <property type="entry name" value="NAC"/>
    <property type="match status" value="1"/>
</dbReference>
<dbReference type="SMART" id="SM01407">
    <property type="entry name" value="NAC"/>
    <property type="match status" value="1"/>
</dbReference>
<dbReference type="PROSITE" id="PS51151">
    <property type="entry name" value="NAC_AB"/>
    <property type="match status" value="1"/>
</dbReference>
<gene>
    <name type="primary">EGD1</name>
    <name type="ORF">PICST_75534</name>
</gene>
<organism>
    <name type="scientific">Scheffersomyces stipitis (strain ATCC 58785 / CBS 6054 / NBRC 10063 / NRRL Y-11545)</name>
    <name type="common">Yeast</name>
    <name type="synonym">Pichia stipitis</name>
    <dbReference type="NCBI Taxonomy" id="322104"/>
    <lineage>
        <taxon>Eukaryota</taxon>
        <taxon>Fungi</taxon>
        <taxon>Dikarya</taxon>
        <taxon>Ascomycota</taxon>
        <taxon>Saccharomycotina</taxon>
        <taxon>Pichiomycetes</taxon>
        <taxon>Debaryomycetaceae</taxon>
        <taxon>Scheffersomyces</taxon>
    </lineage>
</organism>
<accession>A3GHR2</accession>
<feature type="chain" id="PRO_0000285134" description="Nascent polypeptide-associated complex subunit beta">
    <location>
        <begin position="1"/>
        <end position="154"/>
    </location>
</feature>
<feature type="domain" description="NAC-A/B" evidence="2">
    <location>
        <begin position="33"/>
        <end position="98"/>
    </location>
</feature>
<feature type="region of interest" description="Disordered" evidence="3">
    <location>
        <begin position="125"/>
        <end position="154"/>
    </location>
</feature>
<sequence length="154" mass="16591">MPVDPEKLAKLQKAAAKKVGGSRVKAKKVVKTEQDDTKLIEALGKLKATKIENVEEANFFREDGKVLHFNRVGVQGAAASNTFAFTGYPQEKNVTQLIPQILPQLGAENLEILRQLAEQLQAGKAPTELNAGAPAGGDEGIPDLIDGEKFDEVE</sequence>